<name>NQOR_RHOP2</name>
<proteinExistence type="inferred from homology"/>
<accession>Q2IRH1</accession>
<reference key="1">
    <citation type="submission" date="2006-01" db="EMBL/GenBank/DDBJ databases">
        <title>Complete sequence of Rhodopseudomonas palustris HaA2.</title>
        <authorList>
            <consortium name="US DOE Joint Genome Institute"/>
            <person name="Copeland A."/>
            <person name="Lucas S."/>
            <person name="Lapidus A."/>
            <person name="Barry K."/>
            <person name="Detter J.C."/>
            <person name="Glavina T."/>
            <person name="Hammon N."/>
            <person name="Israni S."/>
            <person name="Pitluck S."/>
            <person name="Chain P."/>
            <person name="Malfatti S."/>
            <person name="Shin M."/>
            <person name="Vergez L."/>
            <person name="Schmutz J."/>
            <person name="Larimer F."/>
            <person name="Land M."/>
            <person name="Hauser L."/>
            <person name="Pelletier D.A."/>
            <person name="Kyrpides N."/>
            <person name="Anderson I."/>
            <person name="Oda Y."/>
            <person name="Harwood C.S."/>
            <person name="Richardson P."/>
        </authorList>
    </citation>
    <scope>NUCLEOTIDE SEQUENCE [LARGE SCALE GENOMIC DNA]</scope>
    <source>
        <strain>HaA2</strain>
    </source>
</reference>
<comment type="catalytic activity">
    <reaction evidence="1">
        <text>a quinone + NADH + H(+) = a quinol + NAD(+)</text>
        <dbReference type="Rhea" id="RHEA:46160"/>
        <dbReference type="ChEBI" id="CHEBI:15378"/>
        <dbReference type="ChEBI" id="CHEBI:24646"/>
        <dbReference type="ChEBI" id="CHEBI:57540"/>
        <dbReference type="ChEBI" id="CHEBI:57945"/>
        <dbReference type="ChEBI" id="CHEBI:132124"/>
        <dbReference type="EC" id="1.6.5.2"/>
    </reaction>
</comment>
<comment type="catalytic activity">
    <reaction evidence="1">
        <text>a quinone + NADPH + H(+) = a quinol + NADP(+)</text>
        <dbReference type="Rhea" id="RHEA:46164"/>
        <dbReference type="ChEBI" id="CHEBI:15378"/>
        <dbReference type="ChEBI" id="CHEBI:24646"/>
        <dbReference type="ChEBI" id="CHEBI:57783"/>
        <dbReference type="ChEBI" id="CHEBI:58349"/>
        <dbReference type="ChEBI" id="CHEBI:132124"/>
        <dbReference type="EC" id="1.6.5.2"/>
    </reaction>
</comment>
<comment type="cofactor">
    <cofactor evidence="1">
        <name>FMN</name>
        <dbReference type="ChEBI" id="CHEBI:58210"/>
    </cofactor>
    <text evidence="1">Binds 1 FMN per monomer.</text>
</comment>
<comment type="similarity">
    <text evidence="1">Belongs to the WrbA family.</text>
</comment>
<sequence>MAKVLVLYYSAYGHIETMANAVAEGAREAGATVDIKRVPELVPPDVAKASYYKLDQAAPVATIDDLANYDAIIVGTGTRFGRMASQMANFLDQAGGLWAKGALNGKVGGAFTSTATQHGGQETTLFSIITNLLHFGMVVVGLNYGFQGQMTLGEITGGAPYGATTLTGGDGARQPSANELAGARYQGKTIAETAIKLHG</sequence>
<keyword id="KW-0285">Flavoprotein</keyword>
<keyword id="KW-0288">FMN</keyword>
<keyword id="KW-0520">NAD</keyword>
<keyword id="KW-0521">NADP</keyword>
<keyword id="KW-0547">Nucleotide-binding</keyword>
<keyword id="KW-0560">Oxidoreductase</keyword>
<keyword id="KW-1185">Reference proteome</keyword>
<protein>
    <recommendedName>
        <fullName evidence="1">NAD(P)H dehydrogenase (quinone)</fullName>
        <ecNumber evidence="1">1.6.5.2</ecNumber>
    </recommendedName>
    <alternativeName>
        <fullName>Flavoprotein WrbA</fullName>
    </alternativeName>
    <alternativeName>
        <fullName evidence="1">NAD(P)H:quinone oxidoreductase</fullName>
        <shortName evidence="1">NQO</shortName>
    </alternativeName>
</protein>
<organism>
    <name type="scientific">Rhodopseudomonas palustris (strain HaA2)</name>
    <dbReference type="NCBI Taxonomy" id="316058"/>
    <lineage>
        <taxon>Bacteria</taxon>
        <taxon>Pseudomonadati</taxon>
        <taxon>Pseudomonadota</taxon>
        <taxon>Alphaproteobacteria</taxon>
        <taxon>Hyphomicrobiales</taxon>
        <taxon>Nitrobacteraceae</taxon>
        <taxon>Rhodopseudomonas</taxon>
    </lineage>
</organism>
<dbReference type="EC" id="1.6.5.2" evidence="1"/>
<dbReference type="EMBL" id="CP000250">
    <property type="protein sequence ID" value="ABD09189.1"/>
    <property type="molecule type" value="Genomic_DNA"/>
</dbReference>
<dbReference type="RefSeq" id="WP_011443372.1">
    <property type="nucleotide sequence ID" value="NC_007778.1"/>
</dbReference>
<dbReference type="SMR" id="Q2IRH1"/>
<dbReference type="STRING" id="316058.RPB_4506"/>
<dbReference type="KEGG" id="rpb:RPB_4506"/>
<dbReference type="eggNOG" id="COG0655">
    <property type="taxonomic scope" value="Bacteria"/>
</dbReference>
<dbReference type="HOGENOM" id="CLU_051402_0_2_5"/>
<dbReference type="OrthoDB" id="9801479at2"/>
<dbReference type="Proteomes" id="UP000008809">
    <property type="component" value="Chromosome"/>
</dbReference>
<dbReference type="GO" id="GO:0016020">
    <property type="term" value="C:membrane"/>
    <property type="evidence" value="ECO:0007669"/>
    <property type="project" value="TreeGrafter"/>
</dbReference>
<dbReference type="GO" id="GO:0050660">
    <property type="term" value="F:flavin adenine dinucleotide binding"/>
    <property type="evidence" value="ECO:0007669"/>
    <property type="project" value="UniProtKB-UniRule"/>
</dbReference>
<dbReference type="GO" id="GO:0010181">
    <property type="term" value="F:FMN binding"/>
    <property type="evidence" value="ECO:0007669"/>
    <property type="project" value="InterPro"/>
</dbReference>
<dbReference type="GO" id="GO:0051287">
    <property type="term" value="F:NAD binding"/>
    <property type="evidence" value="ECO:0007669"/>
    <property type="project" value="UniProtKB-UniRule"/>
</dbReference>
<dbReference type="GO" id="GO:0050136">
    <property type="term" value="F:NADH:ubiquinone reductase (non-electrogenic) activity"/>
    <property type="evidence" value="ECO:0007669"/>
    <property type="project" value="RHEA"/>
</dbReference>
<dbReference type="GO" id="GO:0050661">
    <property type="term" value="F:NADP binding"/>
    <property type="evidence" value="ECO:0007669"/>
    <property type="project" value="UniProtKB-UniRule"/>
</dbReference>
<dbReference type="GO" id="GO:0008753">
    <property type="term" value="F:NADPH dehydrogenase (quinone) activity"/>
    <property type="evidence" value="ECO:0007669"/>
    <property type="project" value="RHEA"/>
</dbReference>
<dbReference type="FunFam" id="3.40.50.360:FF:000001">
    <property type="entry name" value="NAD(P)H dehydrogenase (Quinone) FQR1-like"/>
    <property type="match status" value="1"/>
</dbReference>
<dbReference type="Gene3D" id="3.40.50.360">
    <property type="match status" value="1"/>
</dbReference>
<dbReference type="HAMAP" id="MF_01017">
    <property type="entry name" value="NQOR"/>
    <property type="match status" value="1"/>
</dbReference>
<dbReference type="InterPro" id="IPR008254">
    <property type="entry name" value="Flavodoxin/NO_synth"/>
</dbReference>
<dbReference type="InterPro" id="IPR029039">
    <property type="entry name" value="Flavoprotein-like_sf"/>
</dbReference>
<dbReference type="InterPro" id="IPR010089">
    <property type="entry name" value="Flavoprotein_WrbA-like"/>
</dbReference>
<dbReference type="InterPro" id="IPR005025">
    <property type="entry name" value="FMN_Rdtase-like_dom"/>
</dbReference>
<dbReference type="InterPro" id="IPR037513">
    <property type="entry name" value="NQO"/>
</dbReference>
<dbReference type="NCBIfam" id="TIGR01755">
    <property type="entry name" value="flav_wrbA"/>
    <property type="match status" value="1"/>
</dbReference>
<dbReference type="NCBIfam" id="NF002999">
    <property type="entry name" value="PRK03767.1"/>
    <property type="match status" value="1"/>
</dbReference>
<dbReference type="PANTHER" id="PTHR30546">
    <property type="entry name" value="FLAVODOXIN-RELATED PROTEIN WRBA-RELATED"/>
    <property type="match status" value="1"/>
</dbReference>
<dbReference type="PANTHER" id="PTHR30546:SF23">
    <property type="entry name" value="FLAVOPROTEIN-LIKE PROTEIN YCP4-RELATED"/>
    <property type="match status" value="1"/>
</dbReference>
<dbReference type="Pfam" id="PF03358">
    <property type="entry name" value="FMN_red"/>
    <property type="match status" value="1"/>
</dbReference>
<dbReference type="SUPFAM" id="SSF52218">
    <property type="entry name" value="Flavoproteins"/>
    <property type="match status" value="1"/>
</dbReference>
<dbReference type="PROSITE" id="PS50902">
    <property type="entry name" value="FLAVODOXIN_LIKE"/>
    <property type="match status" value="1"/>
</dbReference>
<evidence type="ECO:0000255" key="1">
    <source>
        <dbReference type="HAMAP-Rule" id="MF_01017"/>
    </source>
</evidence>
<gene>
    <name type="ordered locus">RPB_4506</name>
</gene>
<feature type="chain" id="PRO_0000291028" description="NAD(P)H dehydrogenase (quinone)">
    <location>
        <begin position="1"/>
        <end position="199"/>
    </location>
</feature>
<feature type="domain" description="Flavodoxin-like" evidence="1">
    <location>
        <begin position="4"/>
        <end position="190"/>
    </location>
</feature>
<feature type="binding site" evidence="1">
    <location>
        <begin position="10"/>
        <end position="15"/>
    </location>
    <ligand>
        <name>FMN</name>
        <dbReference type="ChEBI" id="CHEBI:58210"/>
    </ligand>
</feature>
<feature type="binding site" evidence="1">
    <location>
        <position position="12"/>
    </location>
    <ligand>
        <name>NAD(+)</name>
        <dbReference type="ChEBI" id="CHEBI:57540"/>
    </ligand>
</feature>
<feature type="binding site" evidence="1">
    <location>
        <begin position="78"/>
        <end position="80"/>
    </location>
    <ligand>
        <name>FMN</name>
        <dbReference type="ChEBI" id="CHEBI:58210"/>
    </ligand>
</feature>
<feature type="binding site" evidence="1">
    <location>
        <position position="98"/>
    </location>
    <ligand>
        <name>substrate</name>
    </ligand>
</feature>
<feature type="binding site" evidence="1">
    <location>
        <begin position="113"/>
        <end position="119"/>
    </location>
    <ligand>
        <name>FMN</name>
        <dbReference type="ChEBI" id="CHEBI:58210"/>
    </ligand>
</feature>
<feature type="binding site" evidence="1">
    <location>
        <position position="134"/>
    </location>
    <ligand>
        <name>FMN</name>
        <dbReference type="ChEBI" id="CHEBI:58210"/>
    </ligand>
</feature>